<proteinExistence type="inferred from homology"/>
<name>YZ05_AQUAE</name>
<protein>
    <recommendedName>
        <fullName>TnpB-like protein aq_aa05</fullName>
    </recommendedName>
</protein>
<reference key="1">
    <citation type="journal article" date="1998" name="Nature">
        <title>The complete genome of the hyperthermophilic bacterium Aquifex aeolicus.</title>
        <authorList>
            <person name="Deckert G."/>
            <person name="Warren P.V."/>
            <person name="Gaasterland T."/>
            <person name="Young W.G."/>
            <person name="Lenox A.L."/>
            <person name="Graham D.E."/>
            <person name="Overbeek R."/>
            <person name="Snead M.A."/>
            <person name="Keller M."/>
            <person name="Aujay M."/>
            <person name="Huber R."/>
            <person name="Feldman R.A."/>
            <person name="Short J.M."/>
            <person name="Olsen G.J."/>
            <person name="Swanson R.V."/>
        </authorList>
    </citation>
    <scope>NUCLEOTIDE SEQUENCE [LARGE SCALE GENOMIC DNA]</scope>
    <source>
        <strain>VF5</strain>
    </source>
</reference>
<organism>
    <name type="scientific">Aquifex aeolicus (strain VF5)</name>
    <dbReference type="NCBI Taxonomy" id="224324"/>
    <lineage>
        <taxon>Bacteria</taxon>
        <taxon>Pseudomonadati</taxon>
        <taxon>Aquificota</taxon>
        <taxon>Aquificia</taxon>
        <taxon>Aquificales</taxon>
        <taxon>Aquificaceae</taxon>
        <taxon>Aquifex</taxon>
    </lineage>
</organism>
<gene>
    <name type="ordered locus">aq_aa05</name>
</gene>
<accession>O66401</accession>
<geneLocation type="plasmid">
    <name>ece1</name>
</geneLocation>
<feature type="chain" id="PRO_0000186982" description="TnpB-like protein aq_aa05">
    <location>
        <begin position="1"/>
        <end position="306"/>
    </location>
</feature>
<feature type="binding site" evidence="1">
    <location>
        <position position="213"/>
    </location>
    <ligand>
        <name>Zn(2+)</name>
        <dbReference type="ChEBI" id="CHEBI:29105"/>
    </ligand>
</feature>
<feature type="binding site" evidence="1">
    <location>
        <position position="216"/>
    </location>
    <ligand>
        <name>Zn(2+)</name>
        <dbReference type="ChEBI" id="CHEBI:29105"/>
    </ligand>
</feature>
<feature type="binding site" evidence="1">
    <location>
        <position position="234"/>
    </location>
    <ligand>
        <name>Zn(2+)</name>
        <dbReference type="ChEBI" id="CHEBI:29105"/>
    </ligand>
</feature>
<feature type="binding site" evidence="1">
    <location>
        <position position="237"/>
    </location>
    <ligand>
        <name>Zn(2+)</name>
        <dbReference type="ChEBI" id="CHEBI:29105"/>
    </ligand>
</feature>
<sequence length="306" mass="35375">MKVYKRLYELLGRGYKPLKSARLIKRGKDYYIGITLQKAVKEKKIKKPRYVINVDLNVQRNLACIGIFEVDWEKRESKLYGIKFVNGKLLRLVYKRDYLFEEIRKKQRQTGRSPQVGDNSRLWKKVNNLNRDIALKVAKEISDIAREFSEKGEVIVVFEKLKGLRGRKGRSKKLNRKINFWMRRKIQERVKELGLEEGFGLDFVYPHYTSKKCSKCGYEGERFSPSGSKALFLCKKCGYVVNADVNAVFNQHFLYLSHLLNGGGKARPVVRVGTSLKSPSREGHNLSGVPKATTTFFYISSLLSTF</sequence>
<comment type="similarity">
    <text evidence="2">Belongs to the transposase 35 family.</text>
</comment>
<keyword id="KW-0233">DNA recombination</keyword>
<keyword id="KW-0238">DNA-binding</keyword>
<keyword id="KW-0479">Metal-binding</keyword>
<keyword id="KW-0614">Plasmid</keyword>
<keyword id="KW-1185">Reference proteome</keyword>
<keyword id="KW-0814">Transposable element</keyword>
<keyword id="KW-0815">Transposition</keyword>
<keyword id="KW-0862">Zinc</keyword>
<evidence type="ECO:0000250" key="1">
    <source>
        <dbReference type="UniProtKB" id="Q7DF80"/>
    </source>
</evidence>
<evidence type="ECO:0000305" key="2"/>
<dbReference type="EMBL" id="AE000667">
    <property type="protein sequence ID" value="AAC07953.1"/>
    <property type="molecule type" value="Genomic_DNA"/>
</dbReference>
<dbReference type="RefSeq" id="NP_046401.1">
    <property type="nucleotide sequence ID" value="NC_001880.1"/>
</dbReference>
<dbReference type="RefSeq" id="WP_010890547.1">
    <property type="nucleotide sequence ID" value="NC_001880.1"/>
</dbReference>
<dbReference type="EnsemblBacteria" id="AAC07953">
    <property type="protein sequence ID" value="AAC07953"/>
    <property type="gene ID" value="aq_aa05"/>
</dbReference>
<dbReference type="KEGG" id="aae:aq_aa05"/>
<dbReference type="eggNOG" id="COG0675">
    <property type="taxonomic scope" value="Bacteria"/>
</dbReference>
<dbReference type="HOGENOM" id="CLU_908056_0_0_0"/>
<dbReference type="InParanoid" id="O66401"/>
<dbReference type="OrthoDB" id="1718745at2"/>
<dbReference type="Proteomes" id="UP000000798">
    <property type="component" value="Plasmid ece1"/>
</dbReference>
<dbReference type="GO" id="GO:0003677">
    <property type="term" value="F:DNA binding"/>
    <property type="evidence" value="ECO:0007669"/>
    <property type="project" value="UniProtKB-KW"/>
</dbReference>
<dbReference type="GO" id="GO:0046872">
    <property type="term" value="F:metal ion binding"/>
    <property type="evidence" value="ECO:0007669"/>
    <property type="project" value="UniProtKB-KW"/>
</dbReference>
<dbReference type="GO" id="GO:0006310">
    <property type="term" value="P:DNA recombination"/>
    <property type="evidence" value="ECO:0007669"/>
    <property type="project" value="UniProtKB-KW"/>
</dbReference>
<dbReference type="GO" id="GO:0032196">
    <property type="term" value="P:transposition"/>
    <property type="evidence" value="ECO:0007669"/>
    <property type="project" value="UniProtKB-KW"/>
</dbReference>
<dbReference type="InterPro" id="IPR010095">
    <property type="entry name" value="Cas12f1-like_TNB"/>
</dbReference>
<dbReference type="NCBIfam" id="TIGR01766">
    <property type="entry name" value="IS200/IS605 family accessory protein TnpB-like domain"/>
    <property type="match status" value="1"/>
</dbReference>
<dbReference type="Pfam" id="PF07282">
    <property type="entry name" value="Cas12f1-like_TNB"/>
    <property type="match status" value="1"/>
</dbReference>